<name>GLRX4_BUCAI</name>
<gene>
    <name type="primary">grxD</name>
    <name type="ordered locus">BU187</name>
</gene>
<comment type="function">
    <text evidence="1">Monothiol glutaredoxin involved in the biogenesis of iron-sulfur clusters.</text>
</comment>
<comment type="subunit">
    <text evidence="1">Homodimer.</text>
</comment>
<comment type="subcellular location">
    <subcellularLocation>
        <location evidence="1">Cytoplasm</location>
    </subcellularLocation>
</comment>
<comment type="similarity">
    <text evidence="3">Belongs to the glutaredoxin family. Monothiol subfamily.</text>
</comment>
<reference key="1">
    <citation type="journal article" date="2000" name="Nature">
        <title>Genome sequence of the endocellular bacterial symbiont of aphids Buchnera sp. APS.</title>
        <authorList>
            <person name="Shigenobu S."/>
            <person name="Watanabe H."/>
            <person name="Hattori M."/>
            <person name="Sakaki Y."/>
            <person name="Ishikawa H."/>
        </authorList>
    </citation>
    <scope>NUCLEOTIDE SEQUENCE [LARGE SCALE GENOMIC DNA]</scope>
    <source>
        <strain>APS</strain>
    </source>
</reference>
<keyword id="KW-0001">2Fe-2S</keyword>
<keyword id="KW-0963">Cytoplasm</keyword>
<keyword id="KW-0408">Iron</keyword>
<keyword id="KW-0411">Iron-sulfur</keyword>
<keyword id="KW-0479">Metal-binding</keyword>
<keyword id="KW-0676">Redox-active center</keyword>
<keyword id="KW-1185">Reference proteome</keyword>
<evidence type="ECO:0000250" key="1"/>
<evidence type="ECO:0000255" key="2">
    <source>
        <dbReference type="PROSITE-ProRule" id="PRU00686"/>
    </source>
</evidence>
<evidence type="ECO:0000305" key="3"/>
<organism>
    <name type="scientific">Buchnera aphidicola subsp. Acyrthosiphon pisum (strain APS)</name>
    <name type="common">Acyrthosiphon pisum symbiotic bacterium</name>
    <dbReference type="NCBI Taxonomy" id="107806"/>
    <lineage>
        <taxon>Bacteria</taxon>
        <taxon>Pseudomonadati</taxon>
        <taxon>Pseudomonadota</taxon>
        <taxon>Gammaproteobacteria</taxon>
        <taxon>Enterobacterales</taxon>
        <taxon>Erwiniaceae</taxon>
        <taxon>Buchnera</taxon>
    </lineage>
</organism>
<feature type="chain" id="PRO_0000102254" description="Glutaredoxin 4">
    <location>
        <begin position="1"/>
        <end position="108"/>
    </location>
</feature>
<feature type="domain" description="Glutaredoxin" evidence="2">
    <location>
        <begin position="4"/>
        <end position="106"/>
    </location>
</feature>
<feature type="binding site" evidence="1">
    <location>
        <position position="21"/>
    </location>
    <ligand>
        <name>glutathione</name>
        <dbReference type="ChEBI" id="CHEBI:57925"/>
    </ligand>
</feature>
<feature type="binding site" evidence="1">
    <location>
        <position position="29"/>
    </location>
    <ligand>
        <name>[2Fe-2S] cluster</name>
        <dbReference type="ChEBI" id="CHEBI:190135"/>
        <note>ligand shared between dimeric partners</note>
    </ligand>
</feature>
<feature type="binding site" evidence="1">
    <location>
        <position position="58"/>
    </location>
    <ligand>
        <name>glutathione</name>
        <dbReference type="ChEBI" id="CHEBI:57925"/>
    </ligand>
</feature>
<feature type="binding site" evidence="1">
    <location>
        <position position="70"/>
    </location>
    <ligand>
        <name>glutathione</name>
        <dbReference type="ChEBI" id="CHEBI:57925"/>
    </ligand>
</feature>
<feature type="binding site" evidence="1">
    <location>
        <begin position="83"/>
        <end position="84"/>
    </location>
    <ligand>
        <name>glutathione</name>
        <dbReference type="ChEBI" id="CHEBI:57925"/>
    </ligand>
</feature>
<protein>
    <recommendedName>
        <fullName>Glutaredoxin 4</fullName>
        <shortName>Grx4</shortName>
    </recommendedName>
    <alternativeName>
        <fullName>Monothiol glutaredoxin</fullName>
    </alternativeName>
</protein>
<sequence>MSIFQKIKKQIQDNIILIYMKGTPEAPSCGFSAQAVQALSFCGEKFAYVNILENPDIRSELPKYANWPTFPQLWIDGELIGGCSIILEMLENGELKKLILKVKKKYQT</sequence>
<accession>P57284</accession>
<proteinExistence type="inferred from homology"/>
<dbReference type="EMBL" id="BA000003">
    <property type="protein sequence ID" value="BAB12904.1"/>
    <property type="molecule type" value="Genomic_DNA"/>
</dbReference>
<dbReference type="RefSeq" id="NP_240018.1">
    <property type="nucleotide sequence ID" value="NC_002528.1"/>
</dbReference>
<dbReference type="RefSeq" id="WP_009874144.1">
    <property type="nucleotide sequence ID" value="NZ_AP036055.1"/>
</dbReference>
<dbReference type="SMR" id="P57284"/>
<dbReference type="STRING" id="563178.BUAP5A_601"/>
<dbReference type="EnsemblBacteria" id="BAB12904">
    <property type="protein sequence ID" value="BAB12904"/>
    <property type="gene ID" value="BAB12904"/>
</dbReference>
<dbReference type="KEGG" id="buc:BU187"/>
<dbReference type="PATRIC" id="fig|107806.10.peg.198"/>
<dbReference type="eggNOG" id="COG0278">
    <property type="taxonomic scope" value="Bacteria"/>
</dbReference>
<dbReference type="HOGENOM" id="CLU_026126_2_1_6"/>
<dbReference type="Proteomes" id="UP000001806">
    <property type="component" value="Chromosome"/>
</dbReference>
<dbReference type="GO" id="GO:0005737">
    <property type="term" value="C:cytoplasm"/>
    <property type="evidence" value="ECO:0007669"/>
    <property type="project" value="UniProtKB-SubCell"/>
</dbReference>
<dbReference type="GO" id="GO:0051537">
    <property type="term" value="F:2 iron, 2 sulfur cluster binding"/>
    <property type="evidence" value="ECO:0007669"/>
    <property type="project" value="UniProtKB-KW"/>
</dbReference>
<dbReference type="GO" id="GO:0015036">
    <property type="term" value="F:disulfide oxidoreductase activity"/>
    <property type="evidence" value="ECO:0007669"/>
    <property type="project" value="InterPro"/>
</dbReference>
<dbReference type="GO" id="GO:0046872">
    <property type="term" value="F:metal ion binding"/>
    <property type="evidence" value="ECO:0007669"/>
    <property type="project" value="UniProtKB-KW"/>
</dbReference>
<dbReference type="CDD" id="cd03028">
    <property type="entry name" value="GRX_PICOT_like"/>
    <property type="match status" value="1"/>
</dbReference>
<dbReference type="FunFam" id="3.40.30.10:FF:000006">
    <property type="entry name" value="Glutaredoxin"/>
    <property type="match status" value="1"/>
</dbReference>
<dbReference type="Gene3D" id="3.40.30.10">
    <property type="entry name" value="Glutaredoxin"/>
    <property type="match status" value="1"/>
</dbReference>
<dbReference type="InterPro" id="IPR002109">
    <property type="entry name" value="Glutaredoxin"/>
</dbReference>
<dbReference type="InterPro" id="IPR033658">
    <property type="entry name" value="GRX_PICOT-like"/>
</dbReference>
<dbReference type="InterPro" id="IPR014434">
    <property type="entry name" value="Monothiol_GRX"/>
</dbReference>
<dbReference type="InterPro" id="IPR004480">
    <property type="entry name" value="Monothiol_GRX-rel"/>
</dbReference>
<dbReference type="InterPro" id="IPR036249">
    <property type="entry name" value="Thioredoxin-like_sf"/>
</dbReference>
<dbReference type="NCBIfam" id="TIGR00365">
    <property type="entry name" value="Grx4 family monothiol glutaredoxin"/>
    <property type="match status" value="1"/>
</dbReference>
<dbReference type="PANTHER" id="PTHR10293">
    <property type="entry name" value="GLUTAREDOXIN FAMILY MEMBER"/>
    <property type="match status" value="1"/>
</dbReference>
<dbReference type="PANTHER" id="PTHR10293:SF72">
    <property type="entry name" value="MONOTHIOL GLUTAREDOXIN-S14, CHLOROPLASTIC"/>
    <property type="match status" value="1"/>
</dbReference>
<dbReference type="Pfam" id="PF00462">
    <property type="entry name" value="Glutaredoxin"/>
    <property type="match status" value="1"/>
</dbReference>
<dbReference type="PIRSF" id="PIRSF005894">
    <property type="entry name" value="Monothiol_GRX"/>
    <property type="match status" value="1"/>
</dbReference>
<dbReference type="SUPFAM" id="SSF52833">
    <property type="entry name" value="Thioredoxin-like"/>
    <property type="match status" value="1"/>
</dbReference>
<dbReference type="PROSITE" id="PS51354">
    <property type="entry name" value="GLUTAREDOXIN_2"/>
    <property type="match status" value="1"/>
</dbReference>